<gene>
    <name evidence="1" type="primary">aroQ</name>
    <name type="ordered locus">SPO1973</name>
</gene>
<comment type="function">
    <text evidence="1">Catalyzes a trans-dehydration via an enolate intermediate.</text>
</comment>
<comment type="catalytic activity">
    <reaction evidence="1">
        <text>3-dehydroquinate = 3-dehydroshikimate + H2O</text>
        <dbReference type="Rhea" id="RHEA:21096"/>
        <dbReference type="ChEBI" id="CHEBI:15377"/>
        <dbReference type="ChEBI" id="CHEBI:16630"/>
        <dbReference type="ChEBI" id="CHEBI:32364"/>
        <dbReference type="EC" id="4.2.1.10"/>
    </reaction>
</comment>
<comment type="pathway">
    <text evidence="1">Metabolic intermediate biosynthesis; chorismate biosynthesis; chorismate from D-erythrose 4-phosphate and phosphoenolpyruvate: step 3/7.</text>
</comment>
<comment type="subunit">
    <text evidence="1">Homododecamer.</text>
</comment>
<comment type="similarity">
    <text evidence="1">Belongs to the type-II 3-dehydroquinase family.</text>
</comment>
<protein>
    <recommendedName>
        <fullName evidence="1">3-dehydroquinate dehydratase</fullName>
        <shortName evidence="1">3-dehydroquinase</shortName>
        <ecNumber evidence="1">4.2.1.10</ecNumber>
    </recommendedName>
    <alternativeName>
        <fullName evidence="1">Type II DHQase</fullName>
    </alternativeName>
</protein>
<organism>
    <name type="scientific">Ruegeria pomeroyi (strain ATCC 700808 / DSM 15171 / DSS-3)</name>
    <name type="common">Silicibacter pomeroyi</name>
    <dbReference type="NCBI Taxonomy" id="246200"/>
    <lineage>
        <taxon>Bacteria</taxon>
        <taxon>Pseudomonadati</taxon>
        <taxon>Pseudomonadota</taxon>
        <taxon>Alphaproteobacteria</taxon>
        <taxon>Rhodobacterales</taxon>
        <taxon>Roseobacteraceae</taxon>
        <taxon>Ruegeria</taxon>
    </lineage>
</organism>
<name>AROQ_RUEPO</name>
<sequence length="149" mass="15578">MTSILVLHGPNLNLLGTRQPEVYGTTTLEMVNSACIAHGQSRGLSVACLQSNHEGALVDAIHAAKGVHRGIVLNAGAYTHTSIALRDAISSVELPVVEVHLSNIHAREAFRHVSHIAPVALGQICGFGAQGYLLALDALAAHLSPEGAR</sequence>
<dbReference type="EC" id="4.2.1.10" evidence="1"/>
<dbReference type="EMBL" id="CP000031">
    <property type="protein sequence ID" value="AAV95249.2"/>
    <property type="molecule type" value="Genomic_DNA"/>
</dbReference>
<dbReference type="RefSeq" id="WP_030003213.1">
    <property type="nucleotide sequence ID" value="NC_003911.12"/>
</dbReference>
<dbReference type="SMR" id="Q5LRZ7"/>
<dbReference type="STRING" id="246200.SPO1973"/>
<dbReference type="PaxDb" id="246200-SPO1973"/>
<dbReference type="KEGG" id="sil:SPO1973"/>
<dbReference type="eggNOG" id="COG0757">
    <property type="taxonomic scope" value="Bacteria"/>
</dbReference>
<dbReference type="HOGENOM" id="CLU_090968_2_0_5"/>
<dbReference type="OrthoDB" id="9790793at2"/>
<dbReference type="UniPathway" id="UPA00053">
    <property type="reaction ID" value="UER00086"/>
</dbReference>
<dbReference type="Proteomes" id="UP000001023">
    <property type="component" value="Chromosome"/>
</dbReference>
<dbReference type="GO" id="GO:0003855">
    <property type="term" value="F:3-dehydroquinate dehydratase activity"/>
    <property type="evidence" value="ECO:0007669"/>
    <property type="project" value="UniProtKB-UniRule"/>
</dbReference>
<dbReference type="GO" id="GO:0008652">
    <property type="term" value="P:amino acid biosynthetic process"/>
    <property type="evidence" value="ECO:0007669"/>
    <property type="project" value="UniProtKB-KW"/>
</dbReference>
<dbReference type="GO" id="GO:0009073">
    <property type="term" value="P:aromatic amino acid family biosynthetic process"/>
    <property type="evidence" value="ECO:0007669"/>
    <property type="project" value="UniProtKB-KW"/>
</dbReference>
<dbReference type="GO" id="GO:0009423">
    <property type="term" value="P:chorismate biosynthetic process"/>
    <property type="evidence" value="ECO:0007669"/>
    <property type="project" value="UniProtKB-UniRule"/>
</dbReference>
<dbReference type="GO" id="GO:0019631">
    <property type="term" value="P:quinate catabolic process"/>
    <property type="evidence" value="ECO:0007669"/>
    <property type="project" value="TreeGrafter"/>
</dbReference>
<dbReference type="CDD" id="cd00466">
    <property type="entry name" value="DHQase_II"/>
    <property type="match status" value="1"/>
</dbReference>
<dbReference type="Gene3D" id="3.40.50.9100">
    <property type="entry name" value="Dehydroquinase, class II"/>
    <property type="match status" value="1"/>
</dbReference>
<dbReference type="HAMAP" id="MF_00169">
    <property type="entry name" value="AroQ"/>
    <property type="match status" value="1"/>
</dbReference>
<dbReference type="InterPro" id="IPR001874">
    <property type="entry name" value="DHquinase_II"/>
</dbReference>
<dbReference type="InterPro" id="IPR018509">
    <property type="entry name" value="DHquinase_II_CS"/>
</dbReference>
<dbReference type="InterPro" id="IPR036441">
    <property type="entry name" value="DHquinase_II_sf"/>
</dbReference>
<dbReference type="NCBIfam" id="TIGR01088">
    <property type="entry name" value="aroQ"/>
    <property type="match status" value="1"/>
</dbReference>
<dbReference type="NCBIfam" id="NF003805">
    <property type="entry name" value="PRK05395.1-2"/>
    <property type="match status" value="1"/>
</dbReference>
<dbReference type="NCBIfam" id="NF003806">
    <property type="entry name" value="PRK05395.1-3"/>
    <property type="match status" value="1"/>
</dbReference>
<dbReference type="NCBIfam" id="NF003807">
    <property type="entry name" value="PRK05395.1-4"/>
    <property type="match status" value="1"/>
</dbReference>
<dbReference type="PANTHER" id="PTHR21272">
    <property type="entry name" value="CATABOLIC 3-DEHYDROQUINASE"/>
    <property type="match status" value="1"/>
</dbReference>
<dbReference type="PANTHER" id="PTHR21272:SF3">
    <property type="entry name" value="CATABOLIC 3-DEHYDROQUINASE"/>
    <property type="match status" value="1"/>
</dbReference>
<dbReference type="Pfam" id="PF01220">
    <property type="entry name" value="DHquinase_II"/>
    <property type="match status" value="1"/>
</dbReference>
<dbReference type="PIRSF" id="PIRSF001399">
    <property type="entry name" value="DHquinase_II"/>
    <property type="match status" value="1"/>
</dbReference>
<dbReference type="SUPFAM" id="SSF52304">
    <property type="entry name" value="Type II 3-dehydroquinate dehydratase"/>
    <property type="match status" value="1"/>
</dbReference>
<dbReference type="PROSITE" id="PS01029">
    <property type="entry name" value="DEHYDROQUINASE_II"/>
    <property type="match status" value="1"/>
</dbReference>
<keyword id="KW-0028">Amino-acid biosynthesis</keyword>
<keyword id="KW-0057">Aromatic amino acid biosynthesis</keyword>
<keyword id="KW-0456">Lyase</keyword>
<keyword id="KW-1185">Reference proteome</keyword>
<proteinExistence type="inferred from homology"/>
<reference key="1">
    <citation type="journal article" date="2004" name="Nature">
        <title>Genome sequence of Silicibacter pomeroyi reveals adaptations to the marine environment.</title>
        <authorList>
            <person name="Moran M.A."/>
            <person name="Buchan A."/>
            <person name="Gonzalez J.M."/>
            <person name="Heidelberg J.F."/>
            <person name="Whitman W.B."/>
            <person name="Kiene R.P."/>
            <person name="Henriksen J.R."/>
            <person name="King G.M."/>
            <person name="Belas R."/>
            <person name="Fuqua C."/>
            <person name="Brinkac L.M."/>
            <person name="Lewis M."/>
            <person name="Johri S."/>
            <person name="Weaver B."/>
            <person name="Pai G."/>
            <person name="Eisen J.A."/>
            <person name="Rahe E."/>
            <person name="Sheldon W.M."/>
            <person name="Ye W."/>
            <person name="Miller T.R."/>
            <person name="Carlton J."/>
            <person name="Rasko D.A."/>
            <person name="Paulsen I.T."/>
            <person name="Ren Q."/>
            <person name="Daugherty S.C."/>
            <person name="DeBoy R.T."/>
            <person name="Dodson R.J."/>
            <person name="Durkin A.S."/>
            <person name="Madupu R."/>
            <person name="Nelson W.C."/>
            <person name="Sullivan S.A."/>
            <person name="Rosovitz M.J."/>
            <person name="Haft D.H."/>
            <person name="Selengut J."/>
            <person name="Ward N."/>
        </authorList>
    </citation>
    <scope>NUCLEOTIDE SEQUENCE [LARGE SCALE GENOMIC DNA]</scope>
    <source>
        <strain>ATCC 700808 / DSM 15171 / DSS-3</strain>
    </source>
</reference>
<reference key="2">
    <citation type="journal article" date="2014" name="Stand. Genomic Sci.">
        <title>An updated genome annotation for the model marine bacterium Ruegeria pomeroyi DSS-3.</title>
        <authorList>
            <person name="Rivers A.R."/>
            <person name="Smith C.B."/>
            <person name="Moran M.A."/>
        </authorList>
    </citation>
    <scope>GENOME REANNOTATION</scope>
    <source>
        <strain>ATCC 700808 / DSM 15171 / DSS-3</strain>
    </source>
</reference>
<evidence type="ECO:0000255" key="1">
    <source>
        <dbReference type="HAMAP-Rule" id="MF_00169"/>
    </source>
</evidence>
<accession>Q5LRZ7</accession>
<feature type="chain" id="PRO_1000023518" description="3-dehydroquinate dehydratase">
    <location>
        <begin position="1"/>
        <end position="149"/>
    </location>
</feature>
<feature type="active site" description="Proton acceptor" evidence="1">
    <location>
        <position position="23"/>
    </location>
</feature>
<feature type="active site" description="Proton donor" evidence="1">
    <location>
        <position position="100"/>
    </location>
</feature>
<feature type="binding site" evidence="1">
    <location>
        <position position="74"/>
    </location>
    <ligand>
        <name>substrate</name>
    </ligand>
</feature>
<feature type="binding site" evidence="1">
    <location>
        <position position="80"/>
    </location>
    <ligand>
        <name>substrate</name>
    </ligand>
</feature>
<feature type="binding site" evidence="1">
    <location>
        <position position="87"/>
    </location>
    <ligand>
        <name>substrate</name>
    </ligand>
</feature>
<feature type="binding site" evidence="1">
    <location>
        <begin position="101"/>
        <end position="102"/>
    </location>
    <ligand>
        <name>substrate</name>
    </ligand>
</feature>
<feature type="binding site" evidence="1">
    <location>
        <position position="111"/>
    </location>
    <ligand>
        <name>substrate</name>
    </ligand>
</feature>
<feature type="site" description="Transition state stabilizer" evidence="1">
    <location>
        <position position="18"/>
    </location>
</feature>